<protein>
    <recommendedName>
        <fullName>Spore-specific protein YSW1</fullName>
    </recommendedName>
</protein>
<sequence>MSSLADTVEGSEAKRGRFSNNALTSDTGILQKNSTLRNWFLKPTADLKNSCEDRVEDDVNDVYLNDKNSQKSVEERKLGRKVRSFFKQTNSNKDESVLEDEDDALVWKKTSNKCAKKENSHDIQKGSFTKKIRNSIFKSANDVKEFRNENNLLLPVELSSDDENESHFTDANSHVMQSKSPEKIPSKDQCLTKGAKNKGLKKEYEKSFEEYSDDSDDEFSPATPPENVLEGPYKFVFQTPNTFTSQPNITVENDFHKGGRHVIDYLNKKLATMNIDIDLTSGGKQNVSWEEELDQLSDHVIESITNHISKGRMHAQEKQDELEKLKLENLNLSTLKQENLQHKQEINSLKDNLESISKKNNDLILEMNKLKKKSTNNKTNEYISTDENENEEITKSNMGPGILELNVNETSKKLQQSTFKPSKYLPRETRNNENRLKHLEKRIFGLEKSLEKKKKQVRADSVRLDLNRYTIDQFLTLLKSLSEVLQFHNVYGNDLKENDDNIIKIETCCSALNMKNCFEDSSFRLQENSFKRQLGPLFANINFSLIDQLTMNFRFYERSANFQKETIGGLRMMLQDKDNYIKTLMQHLKKKESTKLIKDSKNGASTLTS</sequence>
<organism>
    <name type="scientific">Saccharomyces cerevisiae (strain ATCC 204508 / S288c)</name>
    <name type="common">Baker's yeast</name>
    <dbReference type="NCBI Taxonomy" id="559292"/>
    <lineage>
        <taxon>Eukaryota</taxon>
        <taxon>Fungi</taxon>
        <taxon>Dikarya</taxon>
        <taxon>Ascomycota</taxon>
        <taxon>Saccharomycotina</taxon>
        <taxon>Saccharomycetes</taxon>
        <taxon>Saccharomycetales</taxon>
        <taxon>Saccharomycetaceae</taxon>
        <taxon>Saccharomyces</taxon>
    </lineage>
</organism>
<name>YSW1_YEAST</name>
<keyword id="KW-0597">Phosphoprotein</keyword>
<keyword id="KW-1185">Reference proteome</keyword>
<dbReference type="EMBL" id="Z36017">
    <property type="protein sequence ID" value="CAA85106.1"/>
    <property type="molecule type" value="Genomic_DNA"/>
</dbReference>
<dbReference type="EMBL" id="X80913">
    <property type="protein sequence ID" value="CAA56872.1"/>
    <property type="molecule type" value="Genomic_DNA"/>
</dbReference>
<dbReference type="EMBL" id="BK006936">
    <property type="protein sequence ID" value="DAA07263.1"/>
    <property type="molecule type" value="Genomic_DNA"/>
</dbReference>
<dbReference type="PIR" id="S46019">
    <property type="entry name" value="S46019"/>
</dbReference>
<dbReference type="RefSeq" id="NP_009706.3">
    <property type="nucleotide sequence ID" value="NM_001178496.3"/>
</dbReference>
<dbReference type="SMR" id="P38280"/>
<dbReference type="BioGRID" id="32847">
    <property type="interactions" value="36"/>
</dbReference>
<dbReference type="FunCoup" id="P38280">
    <property type="interactions" value="44"/>
</dbReference>
<dbReference type="MINT" id="P38280"/>
<dbReference type="STRING" id="4932.YBR148W"/>
<dbReference type="CarbonylDB" id="P38280"/>
<dbReference type="GlyGen" id="P38280">
    <property type="glycosylation" value="2 sites, 1 O-linked glycan (2 sites)"/>
</dbReference>
<dbReference type="iPTMnet" id="P38280"/>
<dbReference type="PaxDb" id="4932-YBR148W"/>
<dbReference type="PeptideAtlas" id="P38280"/>
<dbReference type="EnsemblFungi" id="YBR148W_mRNA">
    <property type="protein sequence ID" value="YBR148W"/>
    <property type="gene ID" value="YBR148W"/>
</dbReference>
<dbReference type="GeneID" id="852445"/>
<dbReference type="KEGG" id="sce:YBR148W"/>
<dbReference type="AGR" id="SGD:S000000352"/>
<dbReference type="SGD" id="S000000352">
    <property type="gene designation" value="YSW1"/>
</dbReference>
<dbReference type="VEuPathDB" id="FungiDB:YBR148W"/>
<dbReference type="HOGENOM" id="CLU_031221_0_0_1"/>
<dbReference type="InParanoid" id="P38280"/>
<dbReference type="OrthoDB" id="4052031at2759"/>
<dbReference type="BioCyc" id="YEAST:G3O-29100-MONOMER"/>
<dbReference type="BioGRID-ORCS" id="852445">
    <property type="hits" value="1 hit in 10 CRISPR screens"/>
</dbReference>
<dbReference type="PRO" id="PR:P38280"/>
<dbReference type="Proteomes" id="UP000002311">
    <property type="component" value="Chromosome II"/>
</dbReference>
<dbReference type="RNAct" id="P38280">
    <property type="molecule type" value="protein"/>
</dbReference>
<dbReference type="GO" id="GO:0005628">
    <property type="term" value="C:prospore membrane"/>
    <property type="evidence" value="ECO:0000314"/>
    <property type="project" value="SGD"/>
</dbReference>
<dbReference type="GO" id="GO:0031105">
    <property type="term" value="C:septin complex"/>
    <property type="evidence" value="ECO:0007005"/>
    <property type="project" value="SGD"/>
</dbReference>
<dbReference type="GO" id="GO:0032120">
    <property type="term" value="P:ascospore-type prospore membrane formation"/>
    <property type="evidence" value="ECO:0000315"/>
    <property type="project" value="SGD"/>
</dbReference>
<evidence type="ECO:0000256" key="1">
    <source>
        <dbReference type="SAM" id="MobiDB-lite"/>
    </source>
</evidence>
<evidence type="ECO:0000305" key="2"/>
<evidence type="ECO:0007744" key="3">
    <source>
    </source>
</evidence>
<reference key="1">
    <citation type="submission" date="1994-08" db="EMBL/GenBank/DDBJ databases">
        <authorList>
            <person name="Schricker R."/>
            <person name="Ross-Macdonald P.B."/>
            <person name="Kandler D."/>
            <person name="Oberkofler J."/>
            <person name="Breitenbach M."/>
        </authorList>
    </citation>
    <scope>NUCLEOTIDE SEQUENCE [GENOMIC DNA]</scope>
    <source>
        <strain>SK1</strain>
    </source>
</reference>
<reference key="2">
    <citation type="journal article" date="1994" name="EMBO J.">
        <title>Complete DNA sequence of yeast chromosome II.</title>
        <authorList>
            <person name="Feldmann H."/>
            <person name="Aigle M."/>
            <person name="Aljinovic G."/>
            <person name="Andre B."/>
            <person name="Baclet M.C."/>
            <person name="Barthe C."/>
            <person name="Baur A."/>
            <person name="Becam A.-M."/>
            <person name="Biteau N."/>
            <person name="Boles E."/>
            <person name="Brandt T."/>
            <person name="Brendel M."/>
            <person name="Brueckner M."/>
            <person name="Bussereau F."/>
            <person name="Christiansen C."/>
            <person name="Contreras R."/>
            <person name="Crouzet M."/>
            <person name="Cziepluch C."/>
            <person name="Demolis N."/>
            <person name="Delaveau T."/>
            <person name="Doignon F."/>
            <person name="Domdey H."/>
            <person name="Duesterhus S."/>
            <person name="Dubois E."/>
            <person name="Dujon B."/>
            <person name="El Bakkoury M."/>
            <person name="Entian K.-D."/>
            <person name="Feuermann M."/>
            <person name="Fiers W."/>
            <person name="Fobo G.M."/>
            <person name="Fritz C."/>
            <person name="Gassenhuber J."/>
            <person name="Glansdorff N."/>
            <person name="Goffeau A."/>
            <person name="Grivell L.A."/>
            <person name="de Haan M."/>
            <person name="Hein C."/>
            <person name="Herbert C.J."/>
            <person name="Hollenberg C.P."/>
            <person name="Holmstroem K."/>
            <person name="Jacq C."/>
            <person name="Jacquet M."/>
            <person name="Jauniaux J.-C."/>
            <person name="Jonniaux J.-L."/>
            <person name="Kallesoee T."/>
            <person name="Kiesau P."/>
            <person name="Kirchrath L."/>
            <person name="Koetter P."/>
            <person name="Korol S."/>
            <person name="Liebl S."/>
            <person name="Logghe M."/>
            <person name="Lohan A.J.E."/>
            <person name="Louis E.J."/>
            <person name="Li Z.Y."/>
            <person name="Maat M.J."/>
            <person name="Mallet L."/>
            <person name="Mannhaupt G."/>
            <person name="Messenguy F."/>
            <person name="Miosga T."/>
            <person name="Molemans F."/>
            <person name="Mueller S."/>
            <person name="Nasr F."/>
            <person name="Obermaier B."/>
            <person name="Perea J."/>
            <person name="Pierard A."/>
            <person name="Piravandi E."/>
            <person name="Pohl F.M."/>
            <person name="Pohl T.M."/>
            <person name="Potier S."/>
            <person name="Proft M."/>
            <person name="Purnelle B."/>
            <person name="Ramezani Rad M."/>
            <person name="Rieger M."/>
            <person name="Rose M."/>
            <person name="Schaaff-Gerstenschlaeger I."/>
            <person name="Scherens B."/>
            <person name="Schwarzlose C."/>
            <person name="Skala J."/>
            <person name="Slonimski P.P."/>
            <person name="Smits P.H.M."/>
            <person name="Souciet J.-L."/>
            <person name="Steensma H.Y."/>
            <person name="Stucka R."/>
            <person name="Urrestarazu L.A."/>
            <person name="van der Aart Q.J.M."/>
            <person name="Van Dyck L."/>
            <person name="Vassarotti A."/>
            <person name="Vetter I."/>
            <person name="Vierendeels F."/>
            <person name="Vissers S."/>
            <person name="Wagner G."/>
            <person name="de Wergifosse P."/>
            <person name="Wolfe K.H."/>
            <person name="Zagulski M."/>
            <person name="Zimmermann F.K."/>
            <person name="Mewes H.-W."/>
            <person name="Kleine K."/>
        </authorList>
    </citation>
    <scope>NUCLEOTIDE SEQUENCE [LARGE SCALE GENOMIC DNA]</scope>
    <source>
        <strain>ATCC 204508 / S288c</strain>
    </source>
</reference>
<reference key="3">
    <citation type="journal article" date="2014" name="G3 (Bethesda)">
        <title>The reference genome sequence of Saccharomyces cerevisiae: Then and now.</title>
        <authorList>
            <person name="Engel S.R."/>
            <person name="Dietrich F.S."/>
            <person name="Fisk D.G."/>
            <person name="Binkley G."/>
            <person name="Balakrishnan R."/>
            <person name="Costanzo M.C."/>
            <person name="Dwight S.S."/>
            <person name="Hitz B.C."/>
            <person name="Karra K."/>
            <person name="Nash R.S."/>
            <person name="Weng S."/>
            <person name="Wong E.D."/>
            <person name="Lloyd P."/>
            <person name="Skrzypek M.S."/>
            <person name="Miyasato S.R."/>
            <person name="Simison M."/>
            <person name="Cherry J.M."/>
        </authorList>
    </citation>
    <scope>GENOME REANNOTATION</scope>
    <source>
        <strain>ATCC 204508 / S288c</strain>
    </source>
</reference>
<reference key="4">
    <citation type="journal article" date="2009" name="Science">
        <title>Global analysis of Cdk1 substrate phosphorylation sites provides insights into evolution.</title>
        <authorList>
            <person name="Holt L.J."/>
            <person name="Tuch B.B."/>
            <person name="Villen J."/>
            <person name="Johnson A.D."/>
            <person name="Gygi S.P."/>
            <person name="Morgan D.O."/>
        </authorList>
    </citation>
    <scope>PHOSPHORYLATION [LARGE SCALE ANALYSIS] AT SER-159 AND SER-160</scope>
    <scope>IDENTIFICATION BY MASS SPECTROMETRY [LARGE SCALE ANALYSIS]</scope>
</reference>
<proteinExistence type="evidence at protein level"/>
<accession>P38280</accession>
<accession>D6VQE3</accession>
<feature type="chain" id="PRO_0000066511" description="Spore-specific protein YSW1">
    <location>
        <begin position="1"/>
        <end position="609"/>
    </location>
</feature>
<feature type="region of interest" description="Disordered" evidence="1">
    <location>
        <begin position="1"/>
        <end position="24"/>
    </location>
</feature>
<feature type="region of interest" description="Disordered" evidence="1">
    <location>
        <begin position="162"/>
        <end position="225"/>
    </location>
</feature>
<feature type="compositionally biased region" description="Polar residues" evidence="1">
    <location>
        <begin position="169"/>
        <end position="179"/>
    </location>
</feature>
<feature type="compositionally biased region" description="Basic and acidic residues" evidence="1">
    <location>
        <begin position="200"/>
        <end position="209"/>
    </location>
</feature>
<feature type="compositionally biased region" description="Acidic residues" evidence="1">
    <location>
        <begin position="210"/>
        <end position="219"/>
    </location>
</feature>
<feature type="modified residue" description="Phosphoserine" evidence="3">
    <location>
        <position position="159"/>
    </location>
</feature>
<feature type="modified residue" description="Phosphoserine" evidence="3">
    <location>
        <position position="160"/>
    </location>
</feature>
<feature type="sequence conflict" description="In Ref. 1; CAA56872." evidence="2" ref="1">
    <original>D</original>
    <variation>N</variation>
    <location>
        <position position="58"/>
    </location>
</feature>
<feature type="sequence conflict" description="In Ref. 1; CAA56872." evidence="2" ref="1">
    <original>KE</original>
    <variation>NQ</variation>
    <location>
        <begin position="117"/>
        <end position="118"/>
    </location>
</feature>
<feature type="sequence conflict" description="In Ref. 1; CAA56872." evidence="2" ref="1">
    <original>TP</original>
    <variation>IHR</variation>
    <location>
        <begin position="223"/>
        <end position="224"/>
    </location>
</feature>
<feature type="sequence conflict" description="In Ref. 1; CAA56872." evidence="2" ref="1">
    <original>A</original>
    <variation>T</variation>
    <location>
        <position position="271"/>
    </location>
</feature>
<feature type="sequence conflict" description="In Ref. 1; CAA56872." evidence="2" ref="1">
    <original>L</original>
    <variation>M</variation>
    <location>
        <position position="365"/>
    </location>
</feature>
<feature type="sequence conflict" description="In Ref. 1; CAA56872." evidence="2" ref="1">
    <original>QQ</original>
    <variation>HE</variation>
    <location>
        <begin position="415"/>
        <end position="416"/>
    </location>
</feature>
<feature type="sequence conflict" description="In Ref. 1; CAA56872." evidence="2" ref="1">
    <original>D</original>
    <variation>N</variation>
    <location>
        <position position="460"/>
    </location>
</feature>
<feature type="sequence conflict" description="In Ref. 1; CAA56872." evidence="2" ref="1">
    <original>LS</original>
    <variation>SR</variation>
    <location>
        <begin position="481"/>
        <end position="482"/>
    </location>
</feature>
<feature type="sequence conflict" description="In Ref. 1." evidence="2" ref="1">
    <original>HNVYGND</original>
    <variation>PMFMAMI</variation>
    <location>
        <begin position="488"/>
        <end position="494"/>
    </location>
</feature>
<feature type="sequence conflict" description="In Ref. 1." evidence="2" ref="1">
    <location>
        <begin position="495"/>
        <end position="609"/>
    </location>
</feature>
<gene>
    <name type="primary">YSW1</name>
    <name type="ordered locus">YBR148W</name>
    <name type="ORF">YBR1125</name>
</gene>